<feature type="chain" id="PRO_1000215037" description="Large ribosomal subunit protein uL23">
    <location>
        <begin position="1"/>
        <end position="100"/>
    </location>
</feature>
<comment type="function">
    <text evidence="1">One of the early assembly proteins it binds 23S rRNA. One of the proteins that surrounds the polypeptide exit tunnel on the outside of the ribosome. Forms the main docking site for trigger factor binding to the ribosome.</text>
</comment>
<comment type="subunit">
    <text evidence="1">Part of the 50S ribosomal subunit. Contacts protein L29, and trigger factor when it is bound to the ribosome.</text>
</comment>
<comment type="similarity">
    <text evidence="1">Belongs to the universal ribosomal protein uL23 family.</text>
</comment>
<dbReference type="EMBL" id="CP001634">
    <property type="protein sequence ID" value="ACR80581.1"/>
    <property type="molecule type" value="Genomic_DNA"/>
</dbReference>
<dbReference type="RefSeq" id="WP_015869224.1">
    <property type="nucleotide sequence ID" value="NC_012785.1"/>
</dbReference>
<dbReference type="SMR" id="C5CGR2"/>
<dbReference type="STRING" id="521045.Kole_1900"/>
<dbReference type="KEGG" id="kol:Kole_1900"/>
<dbReference type="eggNOG" id="COG0089">
    <property type="taxonomic scope" value="Bacteria"/>
</dbReference>
<dbReference type="HOGENOM" id="CLU_037562_3_2_0"/>
<dbReference type="OrthoDB" id="9793353at2"/>
<dbReference type="Proteomes" id="UP000002382">
    <property type="component" value="Chromosome"/>
</dbReference>
<dbReference type="GO" id="GO:1990904">
    <property type="term" value="C:ribonucleoprotein complex"/>
    <property type="evidence" value="ECO:0007669"/>
    <property type="project" value="UniProtKB-KW"/>
</dbReference>
<dbReference type="GO" id="GO:0005840">
    <property type="term" value="C:ribosome"/>
    <property type="evidence" value="ECO:0007669"/>
    <property type="project" value="UniProtKB-KW"/>
</dbReference>
<dbReference type="GO" id="GO:0019843">
    <property type="term" value="F:rRNA binding"/>
    <property type="evidence" value="ECO:0007669"/>
    <property type="project" value="UniProtKB-UniRule"/>
</dbReference>
<dbReference type="GO" id="GO:0003735">
    <property type="term" value="F:structural constituent of ribosome"/>
    <property type="evidence" value="ECO:0007669"/>
    <property type="project" value="InterPro"/>
</dbReference>
<dbReference type="GO" id="GO:0006412">
    <property type="term" value="P:translation"/>
    <property type="evidence" value="ECO:0007669"/>
    <property type="project" value="UniProtKB-UniRule"/>
</dbReference>
<dbReference type="FunFam" id="3.30.70.330:FF:000001">
    <property type="entry name" value="50S ribosomal protein L23"/>
    <property type="match status" value="1"/>
</dbReference>
<dbReference type="Gene3D" id="3.30.70.330">
    <property type="match status" value="1"/>
</dbReference>
<dbReference type="HAMAP" id="MF_01369_B">
    <property type="entry name" value="Ribosomal_uL23_B"/>
    <property type="match status" value="1"/>
</dbReference>
<dbReference type="InterPro" id="IPR012677">
    <property type="entry name" value="Nucleotide-bd_a/b_plait_sf"/>
</dbReference>
<dbReference type="InterPro" id="IPR013025">
    <property type="entry name" value="Ribosomal_uL23-like"/>
</dbReference>
<dbReference type="InterPro" id="IPR012678">
    <property type="entry name" value="Ribosomal_uL23/eL15/eS24_sf"/>
</dbReference>
<dbReference type="NCBIfam" id="NF004363">
    <property type="entry name" value="PRK05738.2-4"/>
    <property type="match status" value="1"/>
</dbReference>
<dbReference type="PANTHER" id="PTHR11620">
    <property type="entry name" value="60S RIBOSOMAL PROTEIN L23A"/>
    <property type="match status" value="1"/>
</dbReference>
<dbReference type="Pfam" id="PF00276">
    <property type="entry name" value="Ribosomal_L23"/>
    <property type="match status" value="1"/>
</dbReference>
<dbReference type="SUPFAM" id="SSF54189">
    <property type="entry name" value="Ribosomal proteins S24e, L23 and L15e"/>
    <property type="match status" value="1"/>
</dbReference>
<proteinExistence type="inferred from homology"/>
<evidence type="ECO:0000255" key="1">
    <source>
        <dbReference type="HAMAP-Rule" id="MF_01369"/>
    </source>
</evidence>
<evidence type="ECO:0000305" key="2"/>
<gene>
    <name evidence="1" type="primary">rplW</name>
    <name type="ordered locus">Kole_1900</name>
</gene>
<keyword id="KW-1185">Reference proteome</keyword>
<keyword id="KW-0687">Ribonucleoprotein</keyword>
<keyword id="KW-0689">Ribosomal protein</keyword>
<keyword id="KW-0694">RNA-binding</keyword>
<keyword id="KW-0699">rRNA-binding</keyword>
<sequence length="100" mass="11585">MANPKLTLNDVLIRPIITEKSFSGEEYNKYTFEVHRDASKHLIKEAIEKIFNVKVEKINVINVKPKPKRRGIAVGRTRSWKKAVVTLVEGYRIKELEGQH</sequence>
<accession>C5CGR2</accession>
<protein>
    <recommendedName>
        <fullName evidence="1">Large ribosomal subunit protein uL23</fullName>
    </recommendedName>
    <alternativeName>
        <fullName evidence="2">50S ribosomal protein L23</fullName>
    </alternativeName>
</protein>
<name>RL23_KOSOT</name>
<reference key="1">
    <citation type="submission" date="2009-06" db="EMBL/GenBank/DDBJ databases">
        <title>Complete sequence of Thermotogales bacterium TBF 19.5.1.</title>
        <authorList>
            <consortium name="US DOE Joint Genome Institute"/>
            <person name="Lucas S."/>
            <person name="Copeland A."/>
            <person name="Lapidus A."/>
            <person name="Glavina del Rio T."/>
            <person name="Tice H."/>
            <person name="Bruce D."/>
            <person name="Goodwin L."/>
            <person name="Pitluck S."/>
            <person name="Chertkov O."/>
            <person name="Brettin T."/>
            <person name="Detter J.C."/>
            <person name="Han C."/>
            <person name="Schmutz J."/>
            <person name="Larimer F."/>
            <person name="Land M."/>
            <person name="Hauser L."/>
            <person name="Kyrpides N."/>
            <person name="Ovchinnikova G."/>
            <person name="Noll K."/>
        </authorList>
    </citation>
    <scope>NUCLEOTIDE SEQUENCE [LARGE SCALE GENOMIC DNA]</scope>
    <source>
        <strain>ATCC BAA-1733 / DSM 21960 / TBF 19.5.1</strain>
    </source>
</reference>
<organism>
    <name type="scientific">Kosmotoga olearia (strain ATCC BAA-1733 / DSM 21960 / TBF 19.5.1)</name>
    <dbReference type="NCBI Taxonomy" id="521045"/>
    <lineage>
        <taxon>Bacteria</taxon>
        <taxon>Thermotogati</taxon>
        <taxon>Thermotogota</taxon>
        <taxon>Thermotogae</taxon>
        <taxon>Kosmotogales</taxon>
        <taxon>Kosmotogaceae</taxon>
        <taxon>Kosmotoga</taxon>
    </lineage>
</organism>